<gene>
    <name type="primary">CLCA2</name>
    <name type="synonym">CACC3</name>
</gene>
<evidence type="ECO:0000250" key="1">
    <source>
        <dbReference type="UniProtKB" id="A8K7I4"/>
    </source>
</evidence>
<evidence type="ECO:0000255" key="2"/>
<evidence type="ECO:0000255" key="3">
    <source>
        <dbReference type="PROSITE-ProRule" id="PRU00219"/>
    </source>
</evidence>
<evidence type="ECO:0000269" key="4">
    <source>
    </source>
</evidence>
<evidence type="ECO:0000269" key="5">
    <source>
    </source>
</evidence>
<evidence type="ECO:0000269" key="6">
    <source>
    </source>
</evidence>
<evidence type="ECO:0000269" key="7">
    <source>
    </source>
</evidence>
<evidence type="ECO:0000269" key="8">
    <source>
    </source>
</evidence>
<evidence type="ECO:0000269" key="9">
    <source>
    </source>
</evidence>
<evidence type="ECO:0000269" key="10">
    <source>
    </source>
</evidence>
<evidence type="ECO:0000269" key="11">
    <source>
    </source>
</evidence>
<evidence type="ECO:0000269" key="12">
    <source>
    </source>
</evidence>
<evidence type="ECO:0000269" key="13">
    <source>
    </source>
</evidence>
<evidence type="ECO:0000269" key="14">
    <source>
    </source>
</evidence>
<evidence type="ECO:0000305" key="15"/>
<comment type="function">
    <text evidence="6 8 9 11 12">Plays a role in modulating chloride current across the plasma membrane in a calcium-dependent manner, and cell adhesion. Involved in basal cell adhesion and/or stratification of squamous epithelia. May act as a tumor suppressor in breast and colorectal cancer. Plays a key role for cell adhesion in the beginning stages of lung metastasis via the binding to ITGB4.</text>
</comment>
<comment type="subcellular location">
    <subcellularLocation>
        <location>Cell membrane</location>
        <topology>Single-pass type I membrane protein</topology>
    </subcellularLocation>
    <subcellularLocation>
        <location>Basal cell membrane</location>
        <topology>Single-pass type I membrane protein</topology>
    </subcellularLocation>
    <subcellularLocation>
        <location>Cell junction</location>
    </subcellularLocation>
</comment>
<comment type="subcellular location">
    <molecule>Calcium-activated chloride channel regulator 2, 109 kDa form</molecule>
    <subcellularLocation>
        <location>Secreted</location>
    </subcellularLocation>
    <text>Remains associated to the 35 kDa form until an unidentified event triggers the release.</text>
</comment>
<comment type="tissue specificity">
    <text evidence="4 5 6 7 8 10 11 12">Expressed in cornea, skin, vagina, esophagus, and larynx (at protein level). Expressed in trachea and mammary gland. Weakly expressed in testis and kidney. Highly expressed in corneal epithelium, colon and trachea. Moderately expressed in brain, urogenital organs, bladder, uterus and prostate. Highly expressed in tissues containing stratified epithelium including cornea, esophagus, larynx, skin and vagina than those tissues which contain only epithelial monolayers. Expressed in normal breast epithelium but not in breast cancer. Highly expressed during epithelial stratification. Expressed in endothelial cells of lung. Expressed selectively in endothelia of small pulmonary arteries, arterioles, and subpleural and interlobular venules.</text>
</comment>
<comment type="induction">
    <text evidence="6 9">Significantly down-regulated in breast and colorectal cancer.</text>
</comment>
<comment type="domain">
    <text evidence="1">The metalloprotease region is responsible for autoproteolytic processing. It can also cross-cleave other CLCA substrates.</text>
</comment>
<comment type="PTM">
    <text evidence="1">The 141 kDa mature form is autoproteolytically cleaved by the metalloprotease domain, producing a 109 kDa form and a 35 kDa form. The cleavage is necessary for calcium-activated chloride channel (CaCC) activation activity.</text>
</comment>
<comment type="PTM">
    <text evidence="4 13">N-glycosylated.</text>
</comment>
<comment type="similarity">
    <text evidence="15">Belongs to the CLCR family.</text>
</comment>
<organism>
    <name type="scientific">Homo sapiens</name>
    <name type="common">Human</name>
    <dbReference type="NCBI Taxonomy" id="9606"/>
    <lineage>
        <taxon>Eukaryota</taxon>
        <taxon>Metazoa</taxon>
        <taxon>Chordata</taxon>
        <taxon>Craniata</taxon>
        <taxon>Vertebrata</taxon>
        <taxon>Euteleostomi</taxon>
        <taxon>Mammalia</taxon>
        <taxon>Eutheria</taxon>
        <taxon>Euarchontoglires</taxon>
        <taxon>Primates</taxon>
        <taxon>Haplorrhini</taxon>
        <taxon>Catarrhini</taxon>
        <taxon>Hominidae</taxon>
        <taxon>Homo</taxon>
    </lineage>
</organism>
<accession>Q9UQC9</accession>
<accession>A8K2T3</accession>
<accession>Q9Y6N2</accession>
<protein>
    <recommendedName>
        <fullName>Calcium-activated chloride channel regulator 2</fullName>
        <ecNumber evidence="1">3.4.-.-</ecNumber>
    </recommendedName>
    <alternativeName>
        <fullName>Calcium-activated chloride channel family member 2</fullName>
        <shortName>hCLCA2</shortName>
    </alternativeName>
    <alternativeName>
        <fullName>Calcium-activated chloride channel protein 3</fullName>
        <shortName>CaCC-3</shortName>
        <shortName>hCaCC-3</shortName>
    </alternativeName>
    <component>
        <recommendedName>
            <fullName>Calcium-activated chloride channel regulator 2, 109 kDa form</fullName>
        </recommendedName>
    </component>
    <component>
        <recommendedName>
            <fullName>Calcium-activated chloride channel regulator 2, 35 kDa form</fullName>
        </recommendedName>
    </component>
</protein>
<name>CLCA2_HUMAN</name>
<feature type="signal peptide" evidence="2">
    <location>
        <begin position="1"/>
        <end position="31"/>
    </location>
</feature>
<feature type="chain" id="PRO_0000333694" description="Calcium-activated chloride channel regulator 2">
    <location>
        <begin position="32"/>
        <end position="943"/>
    </location>
</feature>
<feature type="chain" id="PRO_0000333695" description="Calcium-activated chloride channel regulator 2, 109 kDa form">
    <location>
        <begin position="33"/>
        <end status="unknown"/>
    </location>
</feature>
<feature type="chain" id="PRO_0000344502" description="Calcium-activated chloride channel regulator 2, 35 kDa form">
    <location>
        <begin status="unknown"/>
        <end position="943"/>
    </location>
</feature>
<feature type="topological domain" description="Extracellular" evidence="2">
    <location>
        <begin position="32"/>
        <end position="901"/>
    </location>
</feature>
<feature type="transmembrane region" description="Helical" evidence="2">
    <location>
        <begin position="902"/>
        <end position="922"/>
    </location>
</feature>
<feature type="topological domain" description="Cytoplasmic" evidence="2">
    <location>
        <begin position="923"/>
        <end position="943"/>
    </location>
</feature>
<feature type="domain" description="VWFA" evidence="3">
    <location>
        <begin position="311"/>
        <end position="483"/>
    </location>
</feature>
<feature type="region of interest" description="Metalloprotease domain" evidence="1">
    <location>
        <begin position="54"/>
        <end position="205"/>
    </location>
</feature>
<feature type="active site" evidence="1">
    <location>
        <position position="165"/>
    </location>
</feature>
<feature type="binding site" evidence="1">
    <location>
        <position position="164"/>
    </location>
    <ligand>
        <name>Zn(2+)</name>
        <dbReference type="ChEBI" id="CHEBI:29105"/>
        <note>catalytic</note>
    </ligand>
</feature>
<feature type="binding site" evidence="1">
    <location>
        <position position="168"/>
    </location>
    <ligand>
        <name>Zn(2+)</name>
        <dbReference type="ChEBI" id="CHEBI:29105"/>
        <note>catalytic</note>
    </ligand>
</feature>
<feature type="binding site" evidence="1">
    <location>
        <position position="175"/>
    </location>
    <ligand>
        <name>Zn(2+)</name>
        <dbReference type="ChEBI" id="CHEBI:29105"/>
        <note>catalytic</note>
    </ligand>
</feature>
<feature type="site" description="Cleavage; by autolysis" evidence="1">
    <location>
        <begin position="708"/>
        <end position="709"/>
    </location>
</feature>
<feature type="glycosylation site" description="N-linked (GlcNAc...) asparagine" evidence="2">
    <location>
        <position position="74"/>
    </location>
</feature>
<feature type="glycosylation site" description="N-linked (GlcNAc...) asparagine">
    <location>
        <position position="150"/>
    </location>
</feature>
<feature type="glycosylation site" description="N-linked (GlcNAc...) asparagine" evidence="2">
    <location>
        <position position="231"/>
    </location>
</feature>
<feature type="glycosylation site" description="N-linked (GlcNAc...) asparagine">
    <location>
        <position position="522"/>
    </location>
</feature>
<feature type="glycosylation site" description="N-linked (GlcNAc...) asparagine">
    <location>
        <position position="822"/>
    </location>
</feature>
<feature type="sequence variant" id="VAR_054057" description="In dbSNP:rs11580625.">
    <original>V</original>
    <variation>I</variation>
    <location>
        <position position="80"/>
    </location>
</feature>
<feature type="sequence variant" id="VAR_043148" description="In dbSNP:rs17409304.">
    <original>Q</original>
    <variation>E</variation>
    <location>
        <position position="306"/>
    </location>
</feature>
<feature type="sequence variant" id="VAR_054058" description="In dbSNP:rs1413426.">
    <original>G</original>
    <variation>D</variation>
    <location>
        <position position="534"/>
    </location>
</feature>
<feature type="sequence variant" id="VAR_043149" description="In a breast cancer sample; somatic mutation." evidence="14">
    <original>G</original>
    <variation>E</variation>
    <location>
        <position position="754"/>
    </location>
</feature>
<feature type="mutagenesis site" description="Reduction in size by around 2 kDa." evidence="4">
    <original>N</original>
    <variation>Q</variation>
    <location>
        <position position="150"/>
    </location>
</feature>
<feature type="mutagenesis site" description="No change in size." evidence="4">
    <original>N</original>
    <variation>Q</variation>
    <location>
        <position position="292"/>
    </location>
</feature>
<feature type="mutagenesis site" description="Reduction in size by around 2 kDa." evidence="4">
    <original>N</original>
    <variation>Q</variation>
    <location>
        <position position="522"/>
    </location>
</feature>
<feature type="mutagenesis site" description="No change in size." evidence="4">
    <original>N</original>
    <variation>Q</variation>
    <location>
        <position position="637"/>
    </location>
</feature>
<feature type="mutagenesis site" description="Reduction in size by around 2 kDa." evidence="4">
    <original>N</original>
    <variation>Q</variation>
    <location>
        <position position="822"/>
    </location>
</feature>
<feature type="mutagenesis site" description="No change in size." evidence="4">
    <original>N</original>
    <variation>Q</variation>
    <location>
        <position position="938"/>
    </location>
</feature>
<feature type="sequence conflict" description="In Ref. 3; BAA77810." evidence="15" ref="3">
    <original>N</original>
    <variation>I</variation>
    <location>
        <position position="178"/>
    </location>
</feature>
<feature type="sequence conflict" description="In Ref. 4; BAF83037." evidence="15" ref="4">
    <original>Q</original>
    <variation>R</variation>
    <location>
        <position position="830"/>
    </location>
</feature>
<dbReference type="EC" id="3.4.-.-" evidence="1"/>
<dbReference type="EMBL" id="AF043977">
    <property type="protein sequence ID" value="AAD40367.1"/>
    <property type="molecule type" value="mRNA"/>
</dbReference>
<dbReference type="EMBL" id="AF127980">
    <property type="protein sequence ID" value="AAD48397.1"/>
    <property type="molecule type" value="mRNA"/>
</dbReference>
<dbReference type="EMBL" id="AB026833">
    <property type="protein sequence ID" value="BAA77810.1"/>
    <property type="molecule type" value="mRNA"/>
</dbReference>
<dbReference type="EMBL" id="AK290348">
    <property type="protein sequence ID" value="BAF83037.1"/>
    <property type="molecule type" value="mRNA"/>
</dbReference>
<dbReference type="EMBL" id="CH471097">
    <property type="protein sequence ID" value="EAW73187.1"/>
    <property type="molecule type" value="Genomic_DNA"/>
</dbReference>
<dbReference type="EMBL" id="BC041096">
    <property type="protein sequence ID" value="AAH41096.1"/>
    <property type="molecule type" value="mRNA"/>
</dbReference>
<dbReference type="CCDS" id="CCDS708.1"/>
<dbReference type="RefSeq" id="NP_006527.1">
    <property type="nucleotide sequence ID" value="NM_006536.7"/>
</dbReference>
<dbReference type="SMR" id="Q9UQC9"/>
<dbReference type="BioGRID" id="114994">
    <property type="interactions" value="5"/>
</dbReference>
<dbReference type="FunCoup" id="Q9UQC9">
    <property type="interactions" value="77"/>
</dbReference>
<dbReference type="IntAct" id="Q9UQC9">
    <property type="interactions" value="3"/>
</dbReference>
<dbReference type="STRING" id="9606.ENSP00000359596"/>
<dbReference type="ChEMBL" id="CHEMBL2364708"/>
<dbReference type="MEROPS" id="M87.003"/>
<dbReference type="TCDB" id="1.A.13.1.10">
    <property type="family name" value="the epithelial chloride channel (e-clc) family"/>
</dbReference>
<dbReference type="GlyConnect" id="1057">
    <property type="glycosylation" value="13 N-Linked glycans (3 sites)"/>
</dbReference>
<dbReference type="GlyCosmos" id="Q9UQC9">
    <property type="glycosylation" value="8 sites, 13 glycans"/>
</dbReference>
<dbReference type="GlyGen" id="Q9UQC9">
    <property type="glycosylation" value="10 sites, 12 N-linked glycans (3 sites), 1 O-linked glycan (2 sites)"/>
</dbReference>
<dbReference type="iPTMnet" id="Q9UQC9"/>
<dbReference type="PhosphoSitePlus" id="Q9UQC9"/>
<dbReference type="BioMuta" id="CLCA2"/>
<dbReference type="DMDM" id="189082520"/>
<dbReference type="MassIVE" id="Q9UQC9"/>
<dbReference type="PaxDb" id="9606-ENSP00000359596"/>
<dbReference type="PeptideAtlas" id="Q9UQC9"/>
<dbReference type="ProteomicsDB" id="85543"/>
<dbReference type="Antibodypedia" id="33584">
    <property type="antibodies" value="92 antibodies from 20 providers"/>
</dbReference>
<dbReference type="DNASU" id="9635"/>
<dbReference type="Ensembl" id="ENST00000370565.5">
    <property type="protein sequence ID" value="ENSP00000359596.4"/>
    <property type="gene ID" value="ENSG00000137975.8"/>
</dbReference>
<dbReference type="GeneID" id="9635"/>
<dbReference type="KEGG" id="hsa:9635"/>
<dbReference type="MANE-Select" id="ENST00000370565.5">
    <property type="protein sequence ID" value="ENSP00000359596.4"/>
    <property type="RefSeq nucleotide sequence ID" value="NM_006536.7"/>
    <property type="RefSeq protein sequence ID" value="NP_006527.1"/>
</dbReference>
<dbReference type="UCSC" id="uc001dlr.5">
    <property type="organism name" value="human"/>
</dbReference>
<dbReference type="AGR" id="HGNC:2016"/>
<dbReference type="CTD" id="9635"/>
<dbReference type="DisGeNET" id="9635"/>
<dbReference type="GeneCards" id="CLCA2"/>
<dbReference type="HGNC" id="HGNC:2016">
    <property type="gene designation" value="CLCA2"/>
</dbReference>
<dbReference type="HPA" id="ENSG00000137975">
    <property type="expression patterns" value="Tissue enhanced (esophagus, skin, vagina)"/>
</dbReference>
<dbReference type="MIM" id="604003">
    <property type="type" value="gene"/>
</dbReference>
<dbReference type="neXtProt" id="NX_Q9UQC9"/>
<dbReference type="OpenTargets" id="ENSG00000137975"/>
<dbReference type="PharmGKB" id="PA26543"/>
<dbReference type="VEuPathDB" id="HostDB:ENSG00000137975"/>
<dbReference type="eggNOG" id="ENOG502RIMV">
    <property type="taxonomic scope" value="Eukaryota"/>
</dbReference>
<dbReference type="GeneTree" id="ENSGT00940000161548"/>
<dbReference type="HOGENOM" id="CLU_005812_0_1_1"/>
<dbReference type="InParanoid" id="Q9UQC9"/>
<dbReference type="OMA" id="GPICNLK"/>
<dbReference type="OrthoDB" id="687730at2759"/>
<dbReference type="PAN-GO" id="Q9UQC9">
    <property type="GO annotations" value="2 GO annotations based on evolutionary models"/>
</dbReference>
<dbReference type="PhylomeDB" id="Q9UQC9"/>
<dbReference type="TreeFam" id="TF328396"/>
<dbReference type="PathwayCommons" id="Q9UQC9"/>
<dbReference type="Reactome" id="R-HSA-2672351">
    <property type="pathway name" value="Stimuli-sensing channels"/>
</dbReference>
<dbReference type="SignaLink" id="Q9UQC9"/>
<dbReference type="BioGRID-ORCS" id="9635">
    <property type="hits" value="10 hits in 1159 CRISPR screens"/>
</dbReference>
<dbReference type="ChiTaRS" id="CLCA2">
    <property type="organism name" value="human"/>
</dbReference>
<dbReference type="GeneWiki" id="CLCA2"/>
<dbReference type="GenomeRNAi" id="9635"/>
<dbReference type="Pharos" id="Q9UQC9">
    <property type="development level" value="Tbio"/>
</dbReference>
<dbReference type="PRO" id="PR:Q9UQC9"/>
<dbReference type="Proteomes" id="UP000005640">
    <property type="component" value="Chromosome 1"/>
</dbReference>
<dbReference type="RNAct" id="Q9UQC9">
    <property type="molecule type" value="protein"/>
</dbReference>
<dbReference type="Bgee" id="ENSG00000137975">
    <property type="expression patterns" value="Expressed in gingival epithelium and 115 other cell types or tissues"/>
</dbReference>
<dbReference type="GO" id="GO:0070161">
    <property type="term" value="C:anchoring junction"/>
    <property type="evidence" value="ECO:0007669"/>
    <property type="project" value="UniProtKB-SubCell"/>
</dbReference>
<dbReference type="GO" id="GO:0009925">
    <property type="term" value="C:basal plasma membrane"/>
    <property type="evidence" value="ECO:0007669"/>
    <property type="project" value="UniProtKB-SubCell"/>
</dbReference>
<dbReference type="GO" id="GO:0030054">
    <property type="term" value="C:cell junction"/>
    <property type="evidence" value="ECO:0000314"/>
    <property type="project" value="HPA"/>
</dbReference>
<dbReference type="GO" id="GO:0005829">
    <property type="term" value="C:cytosol"/>
    <property type="evidence" value="ECO:0000314"/>
    <property type="project" value="HPA"/>
</dbReference>
<dbReference type="GO" id="GO:0005576">
    <property type="term" value="C:extracellular region"/>
    <property type="evidence" value="ECO:0007669"/>
    <property type="project" value="UniProtKB-SubCell"/>
</dbReference>
<dbReference type="GO" id="GO:0031965">
    <property type="term" value="C:nuclear membrane"/>
    <property type="evidence" value="ECO:0000314"/>
    <property type="project" value="HPA"/>
</dbReference>
<dbReference type="GO" id="GO:0005654">
    <property type="term" value="C:nucleoplasm"/>
    <property type="evidence" value="ECO:0000314"/>
    <property type="project" value="HPA"/>
</dbReference>
<dbReference type="GO" id="GO:0005886">
    <property type="term" value="C:plasma membrane"/>
    <property type="evidence" value="ECO:0000314"/>
    <property type="project" value="HPA"/>
</dbReference>
<dbReference type="GO" id="GO:0005254">
    <property type="term" value="F:chloride channel activity"/>
    <property type="evidence" value="ECO:0000304"/>
    <property type="project" value="ProtInc"/>
</dbReference>
<dbReference type="GO" id="GO:0005229">
    <property type="term" value="F:intracellularly calcium-gated chloride channel activity"/>
    <property type="evidence" value="ECO:0000318"/>
    <property type="project" value="GO_Central"/>
</dbReference>
<dbReference type="GO" id="GO:0046872">
    <property type="term" value="F:metal ion binding"/>
    <property type="evidence" value="ECO:0007669"/>
    <property type="project" value="UniProtKB-KW"/>
</dbReference>
<dbReference type="GO" id="GO:0004222">
    <property type="term" value="F:metalloendopeptidase activity"/>
    <property type="evidence" value="ECO:0000304"/>
    <property type="project" value="Reactome"/>
</dbReference>
<dbReference type="GO" id="GO:0007155">
    <property type="term" value="P:cell adhesion"/>
    <property type="evidence" value="ECO:0007669"/>
    <property type="project" value="UniProtKB-KW"/>
</dbReference>
<dbReference type="GO" id="GO:0034220">
    <property type="term" value="P:monoatomic ion transmembrane transport"/>
    <property type="evidence" value="ECO:0000304"/>
    <property type="project" value="Reactome"/>
</dbReference>
<dbReference type="GO" id="GO:0006508">
    <property type="term" value="P:proteolysis"/>
    <property type="evidence" value="ECO:0007669"/>
    <property type="project" value="UniProtKB-KW"/>
</dbReference>
<dbReference type="CDD" id="cd00198">
    <property type="entry name" value="vWFA"/>
    <property type="match status" value="1"/>
</dbReference>
<dbReference type="FunFam" id="3.40.50.410:FF:000059">
    <property type="entry name" value="Calcium-activated chloride channel regulator 2"/>
    <property type="match status" value="1"/>
</dbReference>
<dbReference type="Gene3D" id="3.40.50.410">
    <property type="entry name" value="von Willebrand factor, type A domain"/>
    <property type="match status" value="1"/>
</dbReference>
<dbReference type="InterPro" id="IPR004727">
    <property type="entry name" value="CLCA_chordata"/>
</dbReference>
<dbReference type="InterPro" id="IPR013642">
    <property type="entry name" value="CLCA_N"/>
</dbReference>
<dbReference type="InterPro" id="IPR051266">
    <property type="entry name" value="CLCR"/>
</dbReference>
<dbReference type="InterPro" id="IPR002035">
    <property type="entry name" value="VWF_A"/>
</dbReference>
<dbReference type="InterPro" id="IPR036465">
    <property type="entry name" value="vWFA_dom_sf"/>
</dbReference>
<dbReference type="NCBIfam" id="NF041940">
    <property type="entry name" value="choice_anch_X"/>
    <property type="match status" value="1"/>
</dbReference>
<dbReference type="NCBIfam" id="TIGR00868">
    <property type="entry name" value="hCaCC"/>
    <property type="match status" value="1"/>
</dbReference>
<dbReference type="PANTHER" id="PTHR10579">
    <property type="entry name" value="CALCIUM-ACTIVATED CHLORIDE CHANNEL REGULATOR"/>
    <property type="match status" value="1"/>
</dbReference>
<dbReference type="PANTHER" id="PTHR10579:SF66">
    <property type="entry name" value="CALCIUM-ACTIVATED CHLORIDE CHANNEL REGULATOR 2"/>
    <property type="match status" value="1"/>
</dbReference>
<dbReference type="Pfam" id="PF08434">
    <property type="entry name" value="CLCA"/>
    <property type="match status" value="1"/>
</dbReference>
<dbReference type="SMART" id="SM00327">
    <property type="entry name" value="VWA"/>
    <property type="match status" value="1"/>
</dbReference>
<dbReference type="SUPFAM" id="SSF53300">
    <property type="entry name" value="vWA-like"/>
    <property type="match status" value="1"/>
</dbReference>
<dbReference type="PROSITE" id="PS50234">
    <property type="entry name" value="VWFA"/>
    <property type="match status" value="1"/>
</dbReference>
<keyword id="KW-0068">Autocatalytic cleavage</keyword>
<keyword id="KW-0106">Calcium</keyword>
<keyword id="KW-0130">Cell adhesion</keyword>
<keyword id="KW-0965">Cell junction</keyword>
<keyword id="KW-1003">Cell membrane</keyword>
<keyword id="KW-0868">Chloride</keyword>
<keyword id="KW-0325">Glycoprotein</keyword>
<keyword id="KW-0378">Hydrolase</keyword>
<keyword id="KW-0406">Ion transport</keyword>
<keyword id="KW-0472">Membrane</keyword>
<keyword id="KW-0479">Metal-binding</keyword>
<keyword id="KW-0482">Metalloprotease</keyword>
<keyword id="KW-0645">Protease</keyword>
<keyword id="KW-1267">Proteomics identification</keyword>
<keyword id="KW-1185">Reference proteome</keyword>
<keyword id="KW-0964">Secreted</keyword>
<keyword id="KW-0732">Signal</keyword>
<keyword id="KW-0812">Transmembrane</keyword>
<keyword id="KW-1133">Transmembrane helix</keyword>
<keyword id="KW-0813">Transport</keyword>
<keyword id="KW-0862">Zinc</keyword>
<reference key="1">
    <citation type="journal article" date="1999" name="Am. J. Physiol.">
        <title>Molecular cloning and transmembrane structure of hCLCA2 from human lung, trachea, and mammary gland.</title>
        <authorList>
            <person name="Gruber A.D."/>
            <person name="Schreur K.D."/>
            <person name="Ji H.-L."/>
            <person name="Fuller C.M."/>
            <person name="Pauli B.U."/>
        </authorList>
    </citation>
    <scope>NUCLEOTIDE SEQUENCE [MRNA]</scope>
    <scope>SUBCELLULAR LOCATION</scope>
    <scope>TISSUE SPECIFICITY</scope>
    <scope>GLYCOSYLATION</scope>
    <scope>MUTAGENESIS OF ASN-150; ASN-292; ASN-522; ASN-637; ASN-822 AND ASN-938</scope>
    <source>
        <tissue>Lung</tissue>
    </source>
</reference>
<reference key="2">
    <citation type="journal article" date="1999" name="FEBS Lett.">
        <title>Identification of three novel members of the calcium-dependent chloride channel (CaCC) family predominantly expressed in the digestive tract and trachea.</title>
        <authorList>
            <person name="Agnel M."/>
            <person name="Vermat T."/>
            <person name="Culouscou J.-M."/>
        </authorList>
    </citation>
    <scope>NUCLEOTIDE SEQUENCE [MRNA]</scope>
    <scope>TISSUE SPECIFICITY</scope>
</reference>
<reference key="3">
    <citation type="journal article" date="2000" name="Curr. Eye Res.">
        <title>Isolation and characterization of a Ca(2+)-activated chloride channel from human corneal epithelium.</title>
        <authorList>
            <person name="Itoh R."/>
            <person name="Kawamoto S."/>
            <person name="Miyamoto Y."/>
            <person name="Kinoshita S."/>
            <person name="Okubo K."/>
        </authorList>
    </citation>
    <scope>NUCLEOTIDE SEQUENCE [MRNA]</scope>
    <scope>TISSUE SPECIFICITY</scope>
    <source>
        <tissue>Corneal epithelium</tissue>
    </source>
</reference>
<reference key="4">
    <citation type="journal article" date="2004" name="Nat. Genet.">
        <title>Complete sequencing and characterization of 21,243 full-length human cDNAs.</title>
        <authorList>
            <person name="Ota T."/>
            <person name="Suzuki Y."/>
            <person name="Nishikawa T."/>
            <person name="Otsuki T."/>
            <person name="Sugiyama T."/>
            <person name="Irie R."/>
            <person name="Wakamatsu A."/>
            <person name="Hayashi K."/>
            <person name="Sato H."/>
            <person name="Nagai K."/>
            <person name="Kimura K."/>
            <person name="Makita H."/>
            <person name="Sekine M."/>
            <person name="Obayashi M."/>
            <person name="Nishi T."/>
            <person name="Shibahara T."/>
            <person name="Tanaka T."/>
            <person name="Ishii S."/>
            <person name="Yamamoto J."/>
            <person name="Saito K."/>
            <person name="Kawai Y."/>
            <person name="Isono Y."/>
            <person name="Nakamura Y."/>
            <person name="Nagahari K."/>
            <person name="Murakami K."/>
            <person name="Yasuda T."/>
            <person name="Iwayanagi T."/>
            <person name="Wagatsuma M."/>
            <person name="Shiratori A."/>
            <person name="Sudo H."/>
            <person name="Hosoiri T."/>
            <person name="Kaku Y."/>
            <person name="Kodaira H."/>
            <person name="Kondo H."/>
            <person name="Sugawara M."/>
            <person name="Takahashi M."/>
            <person name="Kanda K."/>
            <person name="Yokoi T."/>
            <person name="Furuya T."/>
            <person name="Kikkawa E."/>
            <person name="Omura Y."/>
            <person name="Abe K."/>
            <person name="Kamihara K."/>
            <person name="Katsuta N."/>
            <person name="Sato K."/>
            <person name="Tanikawa M."/>
            <person name="Yamazaki M."/>
            <person name="Ninomiya K."/>
            <person name="Ishibashi T."/>
            <person name="Yamashita H."/>
            <person name="Murakawa K."/>
            <person name="Fujimori K."/>
            <person name="Tanai H."/>
            <person name="Kimata M."/>
            <person name="Watanabe M."/>
            <person name="Hiraoka S."/>
            <person name="Chiba Y."/>
            <person name="Ishida S."/>
            <person name="Ono Y."/>
            <person name="Takiguchi S."/>
            <person name="Watanabe S."/>
            <person name="Yosida M."/>
            <person name="Hotuta T."/>
            <person name="Kusano J."/>
            <person name="Kanehori K."/>
            <person name="Takahashi-Fujii A."/>
            <person name="Hara H."/>
            <person name="Tanase T.-O."/>
            <person name="Nomura Y."/>
            <person name="Togiya S."/>
            <person name="Komai F."/>
            <person name="Hara R."/>
            <person name="Takeuchi K."/>
            <person name="Arita M."/>
            <person name="Imose N."/>
            <person name="Musashino K."/>
            <person name="Yuuki H."/>
            <person name="Oshima A."/>
            <person name="Sasaki N."/>
            <person name="Aotsuka S."/>
            <person name="Yoshikawa Y."/>
            <person name="Matsunawa H."/>
            <person name="Ichihara T."/>
            <person name="Shiohata N."/>
            <person name="Sano S."/>
            <person name="Moriya S."/>
            <person name="Momiyama H."/>
            <person name="Satoh N."/>
            <person name="Takami S."/>
            <person name="Terashima Y."/>
            <person name="Suzuki O."/>
            <person name="Nakagawa S."/>
            <person name="Senoh A."/>
            <person name="Mizoguchi H."/>
            <person name="Goto Y."/>
            <person name="Shimizu F."/>
            <person name="Wakebe H."/>
            <person name="Hishigaki H."/>
            <person name="Watanabe T."/>
            <person name="Sugiyama A."/>
            <person name="Takemoto M."/>
            <person name="Kawakami B."/>
            <person name="Yamazaki M."/>
            <person name="Watanabe K."/>
            <person name="Kumagai A."/>
            <person name="Itakura S."/>
            <person name="Fukuzumi Y."/>
            <person name="Fujimori Y."/>
            <person name="Komiyama M."/>
            <person name="Tashiro H."/>
            <person name="Tanigami A."/>
            <person name="Fujiwara T."/>
            <person name="Ono T."/>
            <person name="Yamada K."/>
            <person name="Fujii Y."/>
            <person name="Ozaki K."/>
            <person name="Hirao M."/>
            <person name="Ohmori Y."/>
            <person name="Kawabata A."/>
            <person name="Hikiji T."/>
            <person name="Kobatake N."/>
            <person name="Inagaki H."/>
            <person name="Ikema Y."/>
            <person name="Okamoto S."/>
            <person name="Okitani R."/>
            <person name="Kawakami T."/>
            <person name="Noguchi S."/>
            <person name="Itoh T."/>
            <person name="Shigeta K."/>
            <person name="Senba T."/>
            <person name="Matsumura K."/>
            <person name="Nakajima Y."/>
            <person name="Mizuno T."/>
            <person name="Morinaga M."/>
            <person name="Sasaki M."/>
            <person name="Togashi T."/>
            <person name="Oyama M."/>
            <person name="Hata H."/>
            <person name="Watanabe M."/>
            <person name="Komatsu T."/>
            <person name="Mizushima-Sugano J."/>
            <person name="Satoh T."/>
            <person name="Shirai Y."/>
            <person name="Takahashi Y."/>
            <person name="Nakagawa K."/>
            <person name="Okumura K."/>
            <person name="Nagase T."/>
            <person name="Nomura N."/>
            <person name="Kikuchi H."/>
            <person name="Masuho Y."/>
            <person name="Yamashita R."/>
            <person name="Nakai K."/>
            <person name="Yada T."/>
            <person name="Nakamura Y."/>
            <person name="Ohara O."/>
            <person name="Isogai T."/>
            <person name="Sugano S."/>
        </authorList>
    </citation>
    <scope>NUCLEOTIDE SEQUENCE [LARGE SCALE MRNA]</scope>
    <source>
        <tissue>Tongue</tissue>
    </source>
</reference>
<reference key="5">
    <citation type="submission" date="2005-09" db="EMBL/GenBank/DDBJ databases">
        <authorList>
            <person name="Mural R.J."/>
            <person name="Istrail S."/>
            <person name="Sutton G.G."/>
            <person name="Florea L."/>
            <person name="Halpern A.L."/>
            <person name="Mobarry C.M."/>
            <person name="Lippert R."/>
            <person name="Walenz B."/>
            <person name="Shatkay H."/>
            <person name="Dew I."/>
            <person name="Miller J.R."/>
            <person name="Flanigan M.J."/>
            <person name="Edwards N.J."/>
            <person name="Bolanos R."/>
            <person name="Fasulo D."/>
            <person name="Halldorsson B.V."/>
            <person name="Hannenhalli S."/>
            <person name="Turner R."/>
            <person name="Yooseph S."/>
            <person name="Lu F."/>
            <person name="Nusskern D.R."/>
            <person name="Shue B.C."/>
            <person name="Zheng X.H."/>
            <person name="Zhong F."/>
            <person name="Delcher A.L."/>
            <person name="Huson D.H."/>
            <person name="Kravitz S.A."/>
            <person name="Mouchard L."/>
            <person name="Reinert K."/>
            <person name="Remington K.A."/>
            <person name="Clark A.G."/>
            <person name="Waterman M.S."/>
            <person name="Eichler E.E."/>
            <person name="Adams M.D."/>
            <person name="Hunkapiller M.W."/>
            <person name="Myers E.W."/>
            <person name="Venter J.C."/>
        </authorList>
    </citation>
    <scope>NUCLEOTIDE SEQUENCE [LARGE SCALE GENOMIC DNA]</scope>
</reference>
<reference key="6">
    <citation type="journal article" date="2004" name="Genome Res.">
        <title>The status, quality, and expansion of the NIH full-length cDNA project: the Mammalian Gene Collection (MGC).</title>
        <authorList>
            <consortium name="The MGC Project Team"/>
        </authorList>
    </citation>
    <scope>NUCLEOTIDE SEQUENCE [LARGE SCALE MRNA]</scope>
    <source>
        <tissue>Brain</tissue>
    </source>
</reference>
<reference key="7">
    <citation type="journal article" date="1999" name="Cancer Res.">
        <title>Tumorigenicity of human breast cancer is associated with loss of the Ca2+-activated chloride channel CLCA2.</title>
        <authorList>
            <person name="Gruber A.D."/>
            <person name="Pauli B.U."/>
        </authorList>
    </citation>
    <scope>INDUCTION</scope>
    <scope>TISSUE SPECIFICITY</scope>
    <scope>FUNCTION</scope>
</reference>
<reference key="8">
    <citation type="journal article" date="2001" name="DNA Cell Biol.">
        <title>Expression of the Ca2+-activated chloride channel genes CLCA1 and CLCA2 is downregulated in human colorectal cancer.</title>
        <authorList>
            <person name="Bustin S.A."/>
            <person name="Li S.-R."/>
            <person name="Dorudi S."/>
        </authorList>
    </citation>
    <scope>INDUCTION</scope>
    <scope>FUNCTION</scope>
</reference>
<reference key="9">
    <citation type="journal article" date="2001" name="J. Biol. Chem.">
        <title>The breast cancer beta 4 integrin and endothelial human CLCA2 mediate lung metastasis.</title>
        <authorList>
            <person name="Abdel-Ghany M."/>
            <person name="Cheng H.-C."/>
            <person name="Elble R.C."/>
            <person name="Pauli B.U."/>
        </authorList>
    </citation>
    <scope>TISSUE SPECIFICITY</scope>
    <scope>FUNCTION</scope>
</reference>
<reference key="10">
    <citation type="journal article" date="2004" name="J. Histochem. Cytochem.">
        <title>Calcium-activated chloride channel-2 in human epithelia.</title>
        <authorList>
            <person name="Connon C.J."/>
            <person name="Yamasaki K."/>
            <person name="Kawasaki S."/>
            <person name="Quantock A.J."/>
            <person name="Koizumi N."/>
            <person name="Kinoshita S."/>
        </authorList>
    </citation>
    <scope>SUBCELLULAR LOCATION</scope>
    <scope>TISSUE SPECIFICITY</scope>
</reference>
<reference key="11">
    <citation type="journal article" date="2005" name="Acta Histochem.">
        <title>The quantification of hCLCA2 and colocalisation with integrin beta4 in stratified human epithelia.</title>
        <authorList>
            <person name="Connon C.J."/>
            <person name="Kawasaki S."/>
            <person name="Yamasaki K."/>
            <person name="Quantock A.J."/>
            <person name="Kinoshita S."/>
        </authorList>
    </citation>
    <scope>SUBCELLULAR LOCATION</scope>
    <scope>FUNCTION</scope>
    <scope>TISSUE SPECIFICITY</scope>
</reference>
<reference key="12">
    <citation type="journal article" date="2006" name="Cell Tissue Res.">
        <title>Gene expression and immunolocalisation of a calcium-activated chloride channel during the stratification of cultivated and developing corneal epithelium.</title>
        <authorList>
            <person name="Connon C.J."/>
            <person name="Kawasaki S."/>
            <person name="Liles M."/>
            <person name="Koizumi N."/>
            <person name="Yamasaki K."/>
            <person name="Nakamura T."/>
            <person name="Quantock A.J."/>
            <person name="Kinoshita S."/>
        </authorList>
    </citation>
    <scope>TISSUE SPECIFICITY</scope>
    <scope>FUNCTION</scope>
</reference>
<reference key="13">
    <citation type="journal article" date="2006" name="J. Biol. Chem.">
        <title>The putative chloride channel hCLCA2 has a single C-terminal transmembrane segment.</title>
        <authorList>
            <person name="Elble R.C."/>
            <person name="Walia V."/>
            <person name="Cheng H.-C."/>
            <person name="Connon C.J."/>
            <person name="Mundhenk L."/>
            <person name="Gruber A.D."/>
            <person name="Pauli B.U."/>
        </authorList>
    </citation>
    <scope>SUBCELLULAR LOCATION</scope>
    <scope>SHEDDING</scope>
    <scope>GLYCOSYLATION</scope>
    <scope>TOPOLOGY</scope>
</reference>
<reference key="14">
    <citation type="journal article" date="2006" name="Science">
        <title>The consensus coding sequences of human breast and colorectal cancers.</title>
        <authorList>
            <person name="Sjoeblom T."/>
            <person name="Jones S."/>
            <person name="Wood L.D."/>
            <person name="Parsons D.W."/>
            <person name="Lin J."/>
            <person name="Barber T.D."/>
            <person name="Mandelker D."/>
            <person name="Leary R.J."/>
            <person name="Ptak J."/>
            <person name="Silliman N."/>
            <person name="Szabo S."/>
            <person name="Buckhaults P."/>
            <person name="Farrell C."/>
            <person name="Meeh P."/>
            <person name="Markowitz S.D."/>
            <person name="Willis J."/>
            <person name="Dawson D."/>
            <person name="Willson J.K.V."/>
            <person name="Gazdar A.F."/>
            <person name="Hartigan J."/>
            <person name="Wu L."/>
            <person name="Liu C."/>
            <person name="Parmigiani G."/>
            <person name="Park B.H."/>
            <person name="Bachman K.E."/>
            <person name="Papadopoulos N."/>
            <person name="Vogelstein B."/>
            <person name="Kinzler K.W."/>
            <person name="Velculescu V.E."/>
        </authorList>
    </citation>
    <scope>VARIANT [LARGE SCALE ANALYSIS] GLU-754</scope>
</reference>
<sequence length="943" mass="103941">MTQRSIAGPICNLKFVTLLVALSSELPFLGAGVQLQDNGYNGLLIAINPQVPENQNLISNIKEMITEASFYLFNATKRRVFFRNIKILIPATWKANNNSKIKQESYEKANVIVTDWYGAHGDDPYTLQYRGCGKEGKYIHFTPNFLLNDNLTAGYGSRGRVFVHEWAHLRWGVFDEYNNDKPFYINGQNQIKVTRCSSDITGIFVCEKGPCPQENCIISKLFKEGCTFIYNSTQNATASIMFMQSLSSVVEFCNASTHNQEAPNLQNQMCSLRSAWDVITDSADFHHSFPMNGTELPPPPTFSLVQAGDKVVCLVLDVSSKMAEADRLLQLQQAAEFYLMQIVEIHTFVGIASFDSKGEIRAQLHQINSNDDRKLLVSYLPTTVSAKTDISICSGLKKGFEVVEKLNGKAYGSVMILVTSGDDKLLGNCLPTVLSSGSTIHSIALGSSAAPNLEELSRLTGGLKFFVPDISNSNSMIDAFSRISSGTGDIFQQHIQLESTGENVKPHHQLKNTVTVDNTVGNDTMFLVTWQASGPPEIILFDPDGRKYYTNNFITNLTFRTASLWIPGTAKPGHWTYTLNNTHHSLQALKVTVTSRASNSAVPPATVEAFVERDSLHFPHPVMIYANVKQGFYPILNATVTATVEPETGDPVTLRLLDDGAGADVIKNDGIYSRYFFSFAANGRYSLKVHVNHSPSISTPAHSIPGSHAMYVPGYTANGNIQMNAPRKSVGRNEEERKWGFSRVSSGGSFSVLGVPAGPHPDVFPPCKIIDLEAVKVEEELTLSWTAPGEDFDQGQATSYEIRMSKSLQNIQDDFNNAILVNTSKRNPQQAGIREIFTFSPQISTNGPEHQPNGETHESHRIYVAIRAMDRNSLQSAVSNIAQAPLFIPPNSDPVPARDYLILKGVLTAMGLIGIICLIIVVTHHTLSRKKRADKKENGTKLL</sequence>
<proteinExistence type="evidence at protein level"/>